<reference key="1">
    <citation type="journal article" date="1970" name="J. Biol. Chem.">
        <title>The primary structure of porcine pancreatic ribonuclease. II. The amino acid sequence of the reduced S-aminoethylated protein.</title>
        <authorList>
            <person name="Jackson R.L."/>
            <person name="Hirs C.H.W."/>
        </authorList>
    </citation>
    <scope>PROTEIN SEQUENCE</scope>
</reference>
<reference key="2">
    <citation type="journal article" date="1973" name="FEBS Lett.">
        <title>Affinity chromatography of porcine pancreatic ribonuclease and reinvestigation of the N-terminal amino acid sequence.</title>
        <authorList>
            <person name="Wierenga R.K."/>
            <person name="Huizinga J.D."/>
            <person name="Gaastra W."/>
            <person name="Welling G.W."/>
            <person name="Beintema J.J."/>
        </authorList>
    </citation>
    <scope>SEQUENCE REVISION TO 2</scope>
</reference>
<reference key="3">
    <citation type="journal article" date="1970" name="J. Biol. Chem.">
        <title>The primary structure of porcine pancreatic ribonuclease. 3. The disulfide bonds.</title>
        <authorList>
            <person name="Phelan J.J."/>
            <person name="Hirs C.H.W."/>
        </authorList>
    </citation>
    <scope>DISULFIDE BONDS</scope>
</reference>
<protein>
    <recommendedName>
        <fullName>Ribonuclease pancreatic</fullName>
        <ecNumber>4.6.1.18</ecNumber>
    </recommendedName>
    <alternativeName>
        <fullName>RNase 1</fullName>
    </alternativeName>
    <alternativeName>
        <fullName>RNase A</fullName>
    </alternativeName>
</protein>
<keyword id="KW-0903">Direct protein sequencing</keyword>
<keyword id="KW-1015">Disulfide bond</keyword>
<keyword id="KW-0255">Endonuclease</keyword>
<keyword id="KW-0325">Glycoprotein</keyword>
<keyword id="KW-0378">Hydrolase</keyword>
<keyword id="KW-0456">Lyase</keyword>
<keyword id="KW-0540">Nuclease</keyword>
<keyword id="KW-1185">Reference proteome</keyword>
<keyword id="KW-0964">Secreted</keyword>
<sequence>KESPAKKFQRQHMDPDSSSSNSSNYCNLMMSRRNMTQGRCKPVNTFVHESLADVQAVCSQINVNCKNGQTNCYQSNSTMHITDCRQTGSSKYPNCAYKASQEQKHIIVACEGNPPVPVHFDASV</sequence>
<dbReference type="EC" id="4.6.1.18"/>
<dbReference type="PIR" id="A92071">
    <property type="entry name" value="NRPG"/>
</dbReference>
<dbReference type="SMR" id="P00671"/>
<dbReference type="FunCoup" id="P00671">
    <property type="interactions" value="55"/>
</dbReference>
<dbReference type="IntAct" id="P00671">
    <property type="interactions" value="1"/>
</dbReference>
<dbReference type="STRING" id="9823.ENSSSCP00000045550"/>
<dbReference type="GlyCosmos" id="P00671">
    <property type="glycosylation" value="3 sites, No reported glycans"/>
</dbReference>
<dbReference type="GlyGen" id="P00671">
    <property type="glycosylation" value="3 sites"/>
</dbReference>
<dbReference type="PaxDb" id="9823-ENSSSCP00000023197"/>
<dbReference type="eggNOG" id="ENOG502SQ4K">
    <property type="taxonomic scope" value="Eukaryota"/>
</dbReference>
<dbReference type="InParanoid" id="P00671"/>
<dbReference type="BRENDA" id="4.6.1.18">
    <property type="organism ID" value="6170"/>
</dbReference>
<dbReference type="SABIO-RK" id="P00671"/>
<dbReference type="Proteomes" id="UP000008227">
    <property type="component" value="Unplaced"/>
</dbReference>
<dbReference type="Proteomes" id="UP000314985">
    <property type="component" value="Unplaced"/>
</dbReference>
<dbReference type="Proteomes" id="UP000694570">
    <property type="component" value="Unplaced"/>
</dbReference>
<dbReference type="Proteomes" id="UP000694571">
    <property type="component" value="Unplaced"/>
</dbReference>
<dbReference type="Proteomes" id="UP000694720">
    <property type="component" value="Unplaced"/>
</dbReference>
<dbReference type="Proteomes" id="UP000694722">
    <property type="component" value="Unplaced"/>
</dbReference>
<dbReference type="Proteomes" id="UP000694723">
    <property type="component" value="Unplaced"/>
</dbReference>
<dbReference type="Proteomes" id="UP000694724">
    <property type="component" value="Unplaced"/>
</dbReference>
<dbReference type="Proteomes" id="UP000694725">
    <property type="component" value="Unplaced"/>
</dbReference>
<dbReference type="Proteomes" id="UP000694726">
    <property type="component" value="Unplaced"/>
</dbReference>
<dbReference type="Proteomes" id="UP000694727">
    <property type="component" value="Unplaced"/>
</dbReference>
<dbReference type="Proteomes" id="UP000694728">
    <property type="component" value="Unplaced"/>
</dbReference>
<dbReference type="GO" id="GO:0005576">
    <property type="term" value="C:extracellular region"/>
    <property type="evidence" value="ECO:0007669"/>
    <property type="project" value="UniProtKB-SubCell"/>
</dbReference>
<dbReference type="GO" id="GO:0016829">
    <property type="term" value="F:lyase activity"/>
    <property type="evidence" value="ECO:0007669"/>
    <property type="project" value="UniProtKB-KW"/>
</dbReference>
<dbReference type="GO" id="GO:0003676">
    <property type="term" value="F:nucleic acid binding"/>
    <property type="evidence" value="ECO:0007669"/>
    <property type="project" value="InterPro"/>
</dbReference>
<dbReference type="GO" id="GO:0004522">
    <property type="term" value="F:ribonuclease A activity"/>
    <property type="evidence" value="ECO:0007669"/>
    <property type="project" value="UniProtKB-EC"/>
</dbReference>
<dbReference type="GO" id="GO:0004540">
    <property type="term" value="F:RNA nuclease activity"/>
    <property type="evidence" value="ECO:0000318"/>
    <property type="project" value="GO_Central"/>
</dbReference>
<dbReference type="GO" id="GO:0050830">
    <property type="term" value="P:defense response to Gram-positive bacterium"/>
    <property type="evidence" value="ECO:0000318"/>
    <property type="project" value="GO_Central"/>
</dbReference>
<dbReference type="CDD" id="cd06265">
    <property type="entry name" value="RNase_A_canonical"/>
    <property type="match status" value="1"/>
</dbReference>
<dbReference type="FunFam" id="3.10.130.10:FF:000001">
    <property type="entry name" value="Ribonuclease pancreatic"/>
    <property type="match status" value="1"/>
</dbReference>
<dbReference type="Gene3D" id="3.10.130.10">
    <property type="entry name" value="Ribonuclease A-like domain"/>
    <property type="match status" value="1"/>
</dbReference>
<dbReference type="InterPro" id="IPR001427">
    <property type="entry name" value="RNaseA"/>
</dbReference>
<dbReference type="InterPro" id="IPR036816">
    <property type="entry name" value="RNaseA-like_dom_sf"/>
</dbReference>
<dbReference type="InterPro" id="IPR023411">
    <property type="entry name" value="RNaseA_AS"/>
</dbReference>
<dbReference type="InterPro" id="IPR023412">
    <property type="entry name" value="RNaseA_domain"/>
</dbReference>
<dbReference type="PANTHER" id="PTHR11437">
    <property type="entry name" value="RIBONUCLEASE"/>
    <property type="match status" value="1"/>
</dbReference>
<dbReference type="PANTHER" id="PTHR11437:SF24">
    <property type="entry name" value="RIBONUCLEASE PANCREATIC"/>
    <property type="match status" value="1"/>
</dbReference>
<dbReference type="Pfam" id="PF00074">
    <property type="entry name" value="RnaseA"/>
    <property type="match status" value="1"/>
</dbReference>
<dbReference type="PRINTS" id="PR00794">
    <property type="entry name" value="RIBONUCLEASE"/>
</dbReference>
<dbReference type="SMART" id="SM00092">
    <property type="entry name" value="RNAse_Pc"/>
    <property type="match status" value="1"/>
</dbReference>
<dbReference type="SUPFAM" id="SSF54076">
    <property type="entry name" value="RNase A-like"/>
    <property type="match status" value="1"/>
</dbReference>
<dbReference type="PROSITE" id="PS00127">
    <property type="entry name" value="RNASE_PANCREATIC"/>
    <property type="match status" value="1"/>
</dbReference>
<comment type="function">
    <text evidence="1">Endonuclease that catalyzes the cleavage of RNA on the 3' side of pyrimidine nucleotides. Acts on single-stranded and double-stranded RNA (By similarity).</text>
</comment>
<comment type="catalytic activity">
    <reaction>
        <text>an [RNA] containing cytidine + H2O = an [RNA]-3'-cytidine-3'-phosphate + a 5'-hydroxy-ribonucleotide-3'-[RNA].</text>
        <dbReference type="EC" id="4.6.1.18"/>
    </reaction>
</comment>
<comment type="catalytic activity">
    <reaction>
        <text>an [RNA] containing uridine + H2O = an [RNA]-3'-uridine-3'-phosphate + a 5'-hydroxy-ribonucleotide-3'-[RNA].</text>
        <dbReference type="EC" id="4.6.1.18"/>
    </reaction>
</comment>
<comment type="subunit">
    <text evidence="1">Monomer. Interacts with and forms tight 1:1 complexes with RNH1. Dimerization of two such complexes may occur. Interaction with RNH1 inhibits this protein (By similarity).</text>
</comment>
<comment type="subcellular location">
    <subcellularLocation>
        <location>Secreted</location>
    </subcellularLocation>
</comment>
<comment type="tissue specificity">
    <text>Pancreas.</text>
</comment>
<comment type="similarity">
    <text evidence="4">Belongs to the pancreatic ribonuclease family.</text>
</comment>
<proteinExistence type="evidence at protein level"/>
<evidence type="ECO:0000250" key="1"/>
<evidence type="ECO:0000256" key="2">
    <source>
        <dbReference type="SAM" id="MobiDB-lite"/>
    </source>
</evidence>
<evidence type="ECO:0000269" key="3">
    <source>
    </source>
</evidence>
<evidence type="ECO:0000305" key="4"/>
<name>RNAS1_PIG</name>
<feature type="chain" id="PRO_0000057210" description="Ribonuclease pancreatic">
    <location>
        <begin position="1"/>
        <end position="124"/>
    </location>
</feature>
<feature type="region of interest" description="Disordered" evidence="2">
    <location>
        <begin position="1"/>
        <end position="24"/>
    </location>
</feature>
<feature type="compositionally biased region" description="Basic and acidic residues" evidence="2">
    <location>
        <begin position="1"/>
        <end position="15"/>
    </location>
</feature>
<feature type="active site" description="Proton acceptor" evidence="1">
    <location>
        <position position="12"/>
    </location>
</feature>
<feature type="active site" description="Proton donor" evidence="1">
    <location>
        <position position="119"/>
    </location>
</feature>
<feature type="binding site" evidence="1">
    <location>
        <position position="7"/>
    </location>
    <ligand>
        <name>substrate</name>
    </ligand>
</feature>
<feature type="binding site" evidence="1">
    <location>
        <position position="10"/>
    </location>
    <ligand>
        <name>substrate</name>
    </ligand>
</feature>
<feature type="binding site" evidence="1">
    <location>
        <begin position="41"/>
        <end position="45"/>
    </location>
    <ligand>
        <name>substrate</name>
    </ligand>
</feature>
<feature type="binding site" evidence="1">
    <location>
        <position position="66"/>
    </location>
    <ligand>
        <name>substrate</name>
    </ligand>
</feature>
<feature type="binding site" evidence="1">
    <location>
        <position position="85"/>
    </location>
    <ligand>
        <name>substrate</name>
    </ligand>
</feature>
<feature type="glycosylation site" description="N-linked (GlcNAc...) asparagine">
    <location>
        <position position="21"/>
    </location>
</feature>
<feature type="glycosylation site" description="N-linked (GlcNAc...) asparagine">
    <location>
        <position position="34"/>
    </location>
</feature>
<feature type="glycosylation site" description="N-linked (GlcNAc...) asparagine">
    <location>
        <position position="76"/>
    </location>
</feature>
<feature type="disulfide bond" evidence="3">
    <location>
        <begin position="26"/>
        <end position="84"/>
    </location>
</feature>
<feature type="disulfide bond" evidence="3">
    <location>
        <begin position="40"/>
        <end position="95"/>
    </location>
</feature>
<feature type="disulfide bond" evidence="3">
    <location>
        <begin position="58"/>
        <end position="110"/>
    </location>
</feature>
<feature type="disulfide bond" evidence="3">
    <location>
        <begin position="65"/>
        <end position="72"/>
    </location>
</feature>
<gene>
    <name type="primary">RNASE1</name>
    <name type="synonym">RNS1</name>
</gene>
<accession>P00671</accession>
<organism>
    <name type="scientific">Sus scrofa</name>
    <name type="common">Pig</name>
    <dbReference type="NCBI Taxonomy" id="9823"/>
    <lineage>
        <taxon>Eukaryota</taxon>
        <taxon>Metazoa</taxon>
        <taxon>Chordata</taxon>
        <taxon>Craniata</taxon>
        <taxon>Vertebrata</taxon>
        <taxon>Euteleostomi</taxon>
        <taxon>Mammalia</taxon>
        <taxon>Eutheria</taxon>
        <taxon>Laurasiatheria</taxon>
        <taxon>Artiodactyla</taxon>
        <taxon>Suina</taxon>
        <taxon>Suidae</taxon>
        <taxon>Sus</taxon>
    </lineage>
</organism>